<comment type="function">
    <text evidence="1">Component of the serine palmitoyltransferase multisubunit enzyme (SPT) that catalyzes the initial and rate-limiting step in sphingolipid biosynthesis by condensing L-serine and activated acyl-CoA (most commonly palmitoyl-CoA) to form long-chain bases. The SPT complex is composed of SPTLC1, SPTLC2 or SPTLC3 and SPTSSA or SPTSSB. Within this complex, the heterodimer consisting of SPTLC1 and SPTLC2/SPTLC3 forms the catalytic core. Within the SPT complex, SPTSSA stimulates the catalytic activity and plays a role in substrate specificity, which depends upon the overall complex composition. The SPTLC1-SPTLC2-SPTSSA complex shows a strong preference for C16-CoA substrate, while the SPTLC1-SPTLC3-SPTSSA isozyme uses both C14-CoA and C16-CoA as substrates, with a slight preference for C14-CoA. Independently of its action as a SPT component, may be involved in MBOAT7 localization to mitochondria-associated membranes, a membrane bridge between the endoplasmic reticulum and mitochondria, may hence affect MBOAT7-catalyzed incorporation of arachidonic acid into phosphatidylinositol.</text>
</comment>
<comment type="pathway">
    <text>Lipid metabolism; sphingolipid metabolism.</text>
</comment>
<comment type="subunit">
    <text evidence="1">Component of the serine palmitoyltransferase (SPT) complex, which is composed of SPTLC1, SPTLC2 or SPTLC3 and SPTSSA or SPTSSB. The heterodimer consisting of SPTLC1 and SPTLC2/SPTLC3 forms the catalytic core of the enzyme, while SPTSSA or SPTSSB subunits determine substrate specificity. SPT also interacts with ORMDL proteins, especially ORMDL3, which negatively regulate SPT activity in the presence of ceramides.</text>
</comment>
<comment type="subcellular location">
    <subcellularLocation>
        <location evidence="3">Endoplasmic reticulum membrane</location>
        <topology evidence="3">Multi-pass membrane protein</topology>
    </subcellularLocation>
</comment>
<comment type="similarity">
    <text evidence="3">Belongs to the SPTSS family. SPTSSA subfamily.</text>
</comment>
<evidence type="ECO:0000250" key="1">
    <source>
        <dbReference type="UniProtKB" id="Q969W0"/>
    </source>
</evidence>
<evidence type="ECO:0000255" key="2"/>
<evidence type="ECO:0000305" key="3"/>
<reference key="1">
    <citation type="journal article" date="2010" name="BMC Genomics">
        <title>Salmo salar and Esox lucius full-length cDNA sequences reveal changes in evolutionary pressures on a post-tetraploidization genome.</title>
        <authorList>
            <person name="Leong J.S."/>
            <person name="Jantzen S.G."/>
            <person name="von Schalburg K.R."/>
            <person name="Cooper G.A."/>
            <person name="Messmer A.M."/>
            <person name="Liao N.Y."/>
            <person name="Munro S."/>
            <person name="Moore R."/>
            <person name="Holt R.A."/>
            <person name="Jones S.J."/>
            <person name="Davidson W.S."/>
            <person name="Koop B.F."/>
        </authorList>
    </citation>
    <scope>NUCLEOTIDE SEQUENCE [LARGE SCALE MRNA]</scope>
    <source>
        <tissue>Thyroid</tissue>
    </source>
</reference>
<feature type="chain" id="PRO_0000378915" description="Serine palmitoyltransferase small subunit A">
    <location>
        <begin position="1"/>
        <end position="68"/>
    </location>
</feature>
<feature type="topological domain" description="Cytoplasmic" evidence="2">
    <location>
        <begin position="1"/>
        <end position="9"/>
    </location>
</feature>
<feature type="transmembrane region" description="Helical" evidence="2">
    <location>
        <begin position="10"/>
        <end position="26"/>
    </location>
</feature>
<feature type="topological domain" description="Lumenal" evidence="2">
    <location>
        <begin position="27"/>
        <end position="31"/>
    </location>
</feature>
<feature type="transmembrane region" description="Helical" evidence="2">
    <location>
        <begin position="32"/>
        <end position="54"/>
    </location>
</feature>
<feature type="topological domain" description="Cytoplasmic" evidence="2">
    <location>
        <begin position="55"/>
        <end position="68"/>
    </location>
</feature>
<feature type="site" description="Within the serine palmitoyltransferase (SPT) complex, defines the length of the acyl chain-binding pocket, determining the acyl-CoA substrate preference" evidence="1">
    <location>
        <position position="25"/>
    </location>
</feature>
<protein>
    <recommendedName>
        <fullName>Serine palmitoyltransferase small subunit A</fullName>
    </recommendedName>
    <alternativeName>
        <fullName>Small subunit of serine palmitoyltransferase A</fullName>
        <shortName>ssSPTa</shortName>
    </alternativeName>
</protein>
<proteinExistence type="inferred from homology"/>
<organism>
    <name type="scientific">Salmo salar</name>
    <name type="common">Atlantic salmon</name>
    <dbReference type="NCBI Taxonomy" id="8030"/>
    <lineage>
        <taxon>Eukaryota</taxon>
        <taxon>Metazoa</taxon>
        <taxon>Chordata</taxon>
        <taxon>Craniata</taxon>
        <taxon>Vertebrata</taxon>
        <taxon>Euteleostomi</taxon>
        <taxon>Actinopterygii</taxon>
        <taxon>Neopterygii</taxon>
        <taxon>Teleostei</taxon>
        <taxon>Protacanthopterygii</taxon>
        <taxon>Salmoniformes</taxon>
        <taxon>Salmonidae</taxon>
        <taxon>Salmoninae</taxon>
        <taxon>Salmo</taxon>
    </lineage>
</organism>
<name>SPTSA_SALSA</name>
<keyword id="KW-0256">Endoplasmic reticulum</keyword>
<keyword id="KW-0443">Lipid metabolism</keyword>
<keyword id="KW-0472">Membrane</keyword>
<keyword id="KW-1185">Reference proteome</keyword>
<keyword id="KW-0746">Sphingolipid metabolism</keyword>
<keyword id="KW-0812">Transmembrane</keyword>
<keyword id="KW-1133">Transmembrane helix</keyword>
<dbReference type="EMBL" id="BT057114">
    <property type="protein sequence ID" value="ACM08986.1"/>
    <property type="molecule type" value="mRNA"/>
</dbReference>
<dbReference type="RefSeq" id="NP_001139976.1">
    <property type="nucleotide sequence ID" value="NM_001146504.2"/>
</dbReference>
<dbReference type="SMR" id="B9EN89"/>
<dbReference type="STRING" id="8030.ENSSSAP00000088162"/>
<dbReference type="PaxDb" id="8030-ENSSSAP00000088162"/>
<dbReference type="Ensembl" id="ENSSSAT00020140888">
    <property type="protein sequence ID" value="ENSSSAP00020107787"/>
    <property type="gene ID" value="ENSSSAG00020061661"/>
</dbReference>
<dbReference type="Ensembl" id="ENSSSAT00070068294">
    <property type="protein sequence ID" value="ENSSSAP00070065441"/>
    <property type="gene ID" value="ENSSSAG00070042497"/>
</dbReference>
<dbReference type="Ensembl" id="ENSSSAT00075116638">
    <property type="protein sequence ID" value="ENSSSAP00075086564"/>
    <property type="gene ID" value="ENSSSAG00075055419"/>
</dbReference>
<dbReference type="GeneID" id="100286565"/>
<dbReference type="KEGG" id="sasa:100286565"/>
<dbReference type="CTD" id="171546"/>
<dbReference type="OrthoDB" id="92043at7898"/>
<dbReference type="UniPathway" id="UPA00222"/>
<dbReference type="Proteomes" id="UP000087266">
    <property type="component" value="Chromosome ssa09"/>
</dbReference>
<dbReference type="Bgee" id="ENSSSAG00000070042">
    <property type="expression patterns" value="Expressed in hindgut and 26 other cell types or tissues"/>
</dbReference>
<dbReference type="GO" id="GO:0005789">
    <property type="term" value="C:endoplasmic reticulum membrane"/>
    <property type="evidence" value="ECO:0007669"/>
    <property type="project" value="UniProtKB-SubCell"/>
</dbReference>
<dbReference type="GO" id="GO:0017059">
    <property type="term" value="C:serine palmitoyltransferase complex"/>
    <property type="evidence" value="ECO:0000250"/>
    <property type="project" value="UniProtKB"/>
</dbReference>
<dbReference type="GO" id="GO:0004758">
    <property type="term" value="F:serine C-palmitoyltransferase activity"/>
    <property type="evidence" value="ECO:0007669"/>
    <property type="project" value="TreeGrafter"/>
</dbReference>
<dbReference type="GO" id="GO:0046513">
    <property type="term" value="P:ceramide biosynthetic process"/>
    <property type="evidence" value="ECO:0007669"/>
    <property type="project" value="TreeGrafter"/>
</dbReference>
<dbReference type="InterPro" id="IPR024512">
    <property type="entry name" value="Ser_palmitoyltrfase_ssu-like"/>
</dbReference>
<dbReference type="InterPro" id="IPR051900">
    <property type="entry name" value="SPT_small_subunit"/>
</dbReference>
<dbReference type="PANTHER" id="PTHR47084">
    <property type="entry name" value="SERINE PALMITOYLTRANSFERASE SMALL SUBUNIT A"/>
    <property type="match status" value="1"/>
</dbReference>
<dbReference type="PANTHER" id="PTHR47084:SF1">
    <property type="entry name" value="SERINE PALMITOYLTRANSFERASE SMALL SUBUNIT A"/>
    <property type="match status" value="1"/>
</dbReference>
<dbReference type="Pfam" id="PF11779">
    <property type="entry name" value="SPT_ssu-like"/>
    <property type="match status" value="1"/>
</dbReference>
<accession>B9EN89</accession>
<sequence>MAFEDVWKKISWLYYQYILVTALYMLEPWERAIFNSILISVAGMAVYTGYVFMPQHIMAILQYFEMVQ</sequence>
<gene>
    <name type="primary">sptssa</name>
    <name type="synonym">ssspta</name>
</gene>